<feature type="chain" id="PRO_0000159798" description="23S rRNA (guanosine-2'-O-)-methyltransferase RlmB">
    <location>
        <begin position="1"/>
        <end position="248"/>
    </location>
</feature>
<feature type="binding site" evidence="1">
    <location>
        <position position="198"/>
    </location>
    <ligand>
        <name>S-adenosyl-L-methionine</name>
        <dbReference type="ChEBI" id="CHEBI:59789"/>
    </ligand>
</feature>
<feature type="binding site" evidence="1">
    <location>
        <position position="218"/>
    </location>
    <ligand>
        <name>S-adenosyl-L-methionine</name>
        <dbReference type="ChEBI" id="CHEBI:59789"/>
    </ligand>
</feature>
<feature type="binding site" evidence="1">
    <location>
        <position position="227"/>
    </location>
    <ligand>
        <name>S-adenosyl-L-methionine</name>
        <dbReference type="ChEBI" id="CHEBI:59789"/>
    </ligand>
</feature>
<protein>
    <recommendedName>
        <fullName evidence="1">23S rRNA (guanosine-2'-O-)-methyltransferase RlmB</fullName>
        <ecNumber evidence="1">2.1.1.185</ecNumber>
    </recommendedName>
    <alternativeName>
        <fullName evidence="1">23S rRNA (guanosine2251 2'-O)-methyltransferase</fullName>
    </alternativeName>
    <alternativeName>
        <fullName evidence="1">23S rRNA Gm2251 2'-O-methyltransferase</fullName>
    </alternativeName>
</protein>
<accession>Q88DE7</accession>
<reference key="1">
    <citation type="journal article" date="2002" name="Environ. Microbiol.">
        <title>Complete genome sequence and comparative analysis of the metabolically versatile Pseudomonas putida KT2440.</title>
        <authorList>
            <person name="Nelson K.E."/>
            <person name="Weinel C."/>
            <person name="Paulsen I.T."/>
            <person name="Dodson R.J."/>
            <person name="Hilbert H."/>
            <person name="Martins dos Santos V.A.P."/>
            <person name="Fouts D.E."/>
            <person name="Gill S.R."/>
            <person name="Pop M."/>
            <person name="Holmes M."/>
            <person name="Brinkac L.M."/>
            <person name="Beanan M.J."/>
            <person name="DeBoy R.T."/>
            <person name="Daugherty S.C."/>
            <person name="Kolonay J.F."/>
            <person name="Madupu R."/>
            <person name="Nelson W.C."/>
            <person name="White O."/>
            <person name="Peterson J.D."/>
            <person name="Khouri H.M."/>
            <person name="Hance I."/>
            <person name="Chris Lee P."/>
            <person name="Holtzapple E.K."/>
            <person name="Scanlan D."/>
            <person name="Tran K."/>
            <person name="Moazzez A."/>
            <person name="Utterback T.R."/>
            <person name="Rizzo M."/>
            <person name="Lee K."/>
            <person name="Kosack D."/>
            <person name="Moestl D."/>
            <person name="Wedler H."/>
            <person name="Lauber J."/>
            <person name="Stjepandic D."/>
            <person name="Hoheisel J."/>
            <person name="Straetz M."/>
            <person name="Heim S."/>
            <person name="Kiewitz C."/>
            <person name="Eisen J.A."/>
            <person name="Timmis K.N."/>
            <person name="Duesterhoeft A."/>
            <person name="Tuemmler B."/>
            <person name="Fraser C.M."/>
        </authorList>
    </citation>
    <scope>NUCLEOTIDE SEQUENCE [LARGE SCALE GENOMIC DNA]</scope>
    <source>
        <strain>ATCC 47054 / DSM 6125 / CFBP 8728 / NCIMB 11950 / KT2440</strain>
    </source>
</reference>
<sequence length="248" mass="27014">MSQLEKIYGVHAVQALLQHHPKRVKQIWLSEGRSEPRLETLLALAAENRVPVGQAERREMDAWVEGVHQGVVAEVSPSQVWGELMLEELLERTETPPLILVLDGVTDPHNLGACLRTADAAGATAVIVPKDKSATLTPVVRKVACGAAEVIPLVAVTNLARTLEKLQQRGLWVVGTAGEAEQEIYQQDLTGPLVMIMGAEGKGMRRLTREHCDFLVKLPMAGSVSSLNVSVATGVCLFEAVRQRQVKR</sequence>
<keyword id="KW-0963">Cytoplasm</keyword>
<keyword id="KW-0489">Methyltransferase</keyword>
<keyword id="KW-1185">Reference proteome</keyword>
<keyword id="KW-0698">rRNA processing</keyword>
<keyword id="KW-0949">S-adenosyl-L-methionine</keyword>
<keyword id="KW-0808">Transferase</keyword>
<comment type="function">
    <text evidence="1">Specifically methylates the ribose of guanosine 2251 in 23S rRNA.</text>
</comment>
<comment type="catalytic activity">
    <reaction evidence="1">
        <text>guanosine(2251) in 23S rRNA + S-adenosyl-L-methionine = 2'-O-methylguanosine(2251) in 23S rRNA + S-adenosyl-L-homocysteine + H(+)</text>
        <dbReference type="Rhea" id="RHEA:24140"/>
        <dbReference type="Rhea" id="RHEA-COMP:10239"/>
        <dbReference type="Rhea" id="RHEA-COMP:10241"/>
        <dbReference type="ChEBI" id="CHEBI:15378"/>
        <dbReference type="ChEBI" id="CHEBI:57856"/>
        <dbReference type="ChEBI" id="CHEBI:59789"/>
        <dbReference type="ChEBI" id="CHEBI:74269"/>
        <dbReference type="ChEBI" id="CHEBI:74445"/>
        <dbReference type="EC" id="2.1.1.185"/>
    </reaction>
</comment>
<comment type="subcellular location">
    <subcellularLocation>
        <location evidence="1">Cytoplasm</location>
    </subcellularLocation>
</comment>
<comment type="similarity">
    <text evidence="1">Belongs to the class IV-like SAM-binding methyltransferase superfamily. RNA methyltransferase TrmH family. RlmB subfamily.</text>
</comment>
<dbReference type="EC" id="2.1.1.185" evidence="1"/>
<dbReference type="EMBL" id="AE015451">
    <property type="protein sequence ID" value="AAN70447.1"/>
    <property type="molecule type" value="Genomic_DNA"/>
</dbReference>
<dbReference type="RefSeq" id="NP_746983.1">
    <property type="nucleotide sequence ID" value="NC_002947.4"/>
</dbReference>
<dbReference type="RefSeq" id="WP_010955473.1">
    <property type="nucleotide sequence ID" value="NZ_CP169744.1"/>
</dbReference>
<dbReference type="SMR" id="Q88DE7"/>
<dbReference type="STRING" id="160488.PP_4879"/>
<dbReference type="PaxDb" id="160488-PP_4879"/>
<dbReference type="GeneID" id="83682608"/>
<dbReference type="KEGG" id="ppu:PP_4879"/>
<dbReference type="PATRIC" id="fig|160488.4.peg.5211"/>
<dbReference type="eggNOG" id="COG0566">
    <property type="taxonomic scope" value="Bacteria"/>
</dbReference>
<dbReference type="HOGENOM" id="CLU_021322_0_1_6"/>
<dbReference type="OrthoDB" id="9785673at2"/>
<dbReference type="PhylomeDB" id="Q88DE7"/>
<dbReference type="BioCyc" id="PPUT160488:G1G01-5219-MONOMER"/>
<dbReference type="Proteomes" id="UP000000556">
    <property type="component" value="Chromosome"/>
</dbReference>
<dbReference type="GO" id="GO:0005829">
    <property type="term" value="C:cytosol"/>
    <property type="evidence" value="ECO:0007669"/>
    <property type="project" value="TreeGrafter"/>
</dbReference>
<dbReference type="GO" id="GO:0003723">
    <property type="term" value="F:RNA binding"/>
    <property type="evidence" value="ECO:0007669"/>
    <property type="project" value="InterPro"/>
</dbReference>
<dbReference type="GO" id="GO:0070039">
    <property type="term" value="F:rRNA (guanosine-2'-O-)-methyltransferase activity"/>
    <property type="evidence" value="ECO:0007669"/>
    <property type="project" value="UniProtKB-UniRule"/>
</dbReference>
<dbReference type="CDD" id="cd18103">
    <property type="entry name" value="SpoU-like_RlmB"/>
    <property type="match status" value="1"/>
</dbReference>
<dbReference type="FunFam" id="3.40.1280.10:FF:000005">
    <property type="entry name" value="23S rRNA (guanosine-2'-O-)-methyltransferase RlmB"/>
    <property type="match status" value="1"/>
</dbReference>
<dbReference type="Gene3D" id="3.30.1330.30">
    <property type="match status" value="1"/>
</dbReference>
<dbReference type="Gene3D" id="3.40.1280.10">
    <property type="match status" value="1"/>
</dbReference>
<dbReference type="HAMAP" id="MF_01887">
    <property type="entry name" value="23SrRNA_methyltr_B"/>
    <property type="match status" value="1"/>
</dbReference>
<dbReference type="InterPro" id="IPR024915">
    <property type="entry name" value="23S_rRNA_MeTrfase_RlmB"/>
</dbReference>
<dbReference type="InterPro" id="IPR029028">
    <property type="entry name" value="Alpha/beta_knot_MTases"/>
</dbReference>
<dbReference type="InterPro" id="IPR029064">
    <property type="entry name" value="Ribosomal_eL30-like_sf"/>
</dbReference>
<dbReference type="InterPro" id="IPR004441">
    <property type="entry name" value="rRNA_MeTrfase_TrmH"/>
</dbReference>
<dbReference type="InterPro" id="IPR001537">
    <property type="entry name" value="SpoU_MeTrfase"/>
</dbReference>
<dbReference type="InterPro" id="IPR013123">
    <property type="entry name" value="SpoU_subst-bd"/>
</dbReference>
<dbReference type="InterPro" id="IPR029026">
    <property type="entry name" value="tRNA_m1G_MTases_N"/>
</dbReference>
<dbReference type="NCBIfam" id="NF008386">
    <property type="entry name" value="PRK11181.1"/>
    <property type="match status" value="1"/>
</dbReference>
<dbReference type="NCBIfam" id="TIGR00186">
    <property type="entry name" value="rRNA_methyl_3"/>
    <property type="match status" value="1"/>
</dbReference>
<dbReference type="PANTHER" id="PTHR46429">
    <property type="entry name" value="23S RRNA (GUANOSINE-2'-O-)-METHYLTRANSFERASE RLMB"/>
    <property type="match status" value="1"/>
</dbReference>
<dbReference type="PANTHER" id="PTHR46429:SF1">
    <property type="entry name" value="23S RRNA (GUANOSINE-2'-O-)-METHYLTRANSFERASE RLMB"/>
    <property type="match status" value="1"/>
</dbReference>
<dbReference type="Pfam" id="PF00588">
    <property type="entry name" value="SpoU_methylase"/>
    <property type="match status" value="1"/>
</dbReference>
<dbReference type="Pfam" id="PF08032">
    <property type="entry name" value="SpoU_sub_bind"/>
    <property type="match status" value="1"/>
</dbReference>
<dbReference type="SMART" id="SM00967">
    <property type="entry name" value="SpoU_sub_bind"/>
    <property type="match status" value="1"/>
</dbReference>
<dbReference type="SUPFAM" id="SSF75217">
    <property type="entry name" value="alpha/beta knot"/>
    <property type="match status" value="1"/>
</dbReference>
<dbReference type="SUPFAM" id="SSF55315">
    <property type="entry name" value="L30e-like"/>
    <property type="match status" value="1"/>
</dbReference>
<proteinExistence type="inferred from homology"/>
<gene>
    <name evidence="1" type="primary">rlmB</name>
    <name type="ordered locus">PP_4879</name>
</gene>
<evidence type="ECO:0000255" key="1">
    <source>
        <dbReference type="HAMAP-Rule" id="MF_01887"/>
    </source>
</evidence>
<name>RLMB_PSEPK</name>
<organism>
    <name type="scientific">Pseudomonas putida (strain ATCC 47054 / DSM 6125 / CFBP 8728 / NCIMB 11950 / KT2440)</name>
    <dbReference type="NCBI Taxonomy" id="160488"/>
    <lineage>
        <taxon>Bacteria</taxon>
        <taxon>Pseudomonadati</taxon>
        <taxon>Pseudomonadota</taxon>
        <taxon>Gammaproteobacteria</taxon>
        <taxon>Pseudomonadales</taxon>
        <taxon>Pseudomonadaceae</taxon>
        <taxon>Pseudomonas</taxon>
    </lineage>
</organism>